<organism>
    <name type="scientific">Escherichia coli (strain K12)</name>
    <dbReference type="NCBI Taxonomy" id="83333"/>
    <lineage>
        <taxon>Bacteria</taxon>
        <taxon>Pseudomonadati</taxon>
        <taxon>Pseudomonadota</taxon>
        <taxon>Gammaproteobacteria</taxon>
        <taxon>Enterobacterales</taxon>
        <taxon>Enterobacteriaceae</taxon>
        <taxon>Escherichia</taxon>
    </lineage>
</organism>
<gene>
    <name type="primary">ycjM</name>
    <name type="synonym">ggaP</name>
    <name type="ordered locus">b1309</name>
    <name type="ordered locus">JW1302</name>
</gene>
<protein>
    <recommendedName>
        <fullName evidence="4">Glucosylglycerate phosphorylase</fullName>
        <shortName evidence="4">GGa phosphorylase</shortName>
        <shortName evidence="4">GGaP</shortName>
        <ecNumber evidence="2 3">2.4.1.352</ecNumber>
    </recommendedName>
</protein>
<comment type="function">
    <text evidence="2 3">Catalyzes the reversible phosphorolysis of glucosylglycerate into alpha-D-glucose 1-phosphate (Glc1P) and D-glycerate (also called (R)-glycerate) (PubMed:28754708, PubMed:29684280). May be a regulator of intracellular levels of glucosylglycerate, a compatible solute that primarily protects organisms facing salt stress and very specific nutritional constraints (PubMed:28754708). Cannot catalyze the phosphorolysis of sucrose (PubMed:28754708). Does not act on other sugars such as alpha-D-galactose 1-phosphate, alpha-D-mannose 1-phosphate or beta-D-glucose 1-phosphate; in vitro D-erythronate can substitute for D-glycerate with a much lower efficiency (PubMed:29684280).</text>
</comment>
<comment type="catalytic activity">
    <reaction evidence="2 3">
        <text>(2R)-2-O-(alpha-D-glucopyranosyl)-glycerate + phosphate = (R)-glycerate + alpha-D-glucose 1-phosphate</text>
        <dbReference type="Rhea" id="RHEA:55268"/>
        <dbReference type="ChEBI" id="CHEBI:16659"/>
        <dbReference type="ChEBI" id="CHEBI:43474"/>
        <dbReference type="ChEBI" id="CHEBI:58601"/>
        <dbReference type="ChEBI" id="CHEBI:62510"/>
        <dbReference type="EC" id="2.4.1.352"/>
    </reaction>
</comment>
<comment type="biophysicochemical properties">
    <kinetics>
        <KM evidence="2">3.4 mM for D-glycerate (at pH 6.5 and 30 degrees Celsius)</KM>
        <KM evidence="3">69 uM for 2-O-(alpha-D-glucopyranosyl)-D-glycerate (at pH 6.5 and 30 degrees Celsius)</KM>
        <KM evidence="3">2.2 mM for phosphate (at pH 6.5 and 30 degrees Celsius)</KM>
        <KM evidence="3">9.4 mM for alpha-D-glucose 1-phosphate (at pH 6.5 and 30 degrees Celsius)</KM>
        <KM evidence="3">4.4 mM for D-glycerate (at pH 6.5 and 30 degrees Celsius)</KM>
        <text evidence="3">kcat is 2.2 sec(-1) for phosphorolysis of 2-O-(alpha-D-glucopyranosyl)-D-glycerate, kcat is 325 sec(-1) for glyceration of alpha-D-glucose 1-phosphate.</text>
    </kinetics>
</comment>
<comment type="disruption phenotype">
    <text evidence="3">No visible phenotype when grown on glucose.</text>
</comment>
<comment type="similarity">
    <text evidence="5">Belongs to the glycosyl hydrolase 13 family. Glucosylglycerate phosphorylase subfamily.</text>
</comment>
<accession>P76041</accession>
<accession>P78149</accession>
<accession>P78151</accession>
<name>GGAP_ECOLI</name>
<proteinExistence type="evidence at protein level"/>
<reference key="1">
    <citation type="journal article" date="1996" name="DNA Res.">
        <title>A 570-kb DNA sequence of the Escherichia coli K-12 genome corresponding to the 28.0-40.1 min region on the linkage map.</title>
        <authorList>
            <person name="Aiba H."/>
            <person name="Baba T."/>
            <person name="Fujita K."/>
            <person name="Hayashi K."/>
            <person name="Inada T."/>
            <person name="Isono K."/>
            <person name="Itoh T."/>
            <person name="Kasai H."/>
            <person name="Kashimoto K."/>
            <person name="Kimura S."/>
            <person name="Kitakawa M."/>
            <person name="Kitagawa M."/>
            <person name="Makino K."/>
            <person name="Miki T."/>
            <person name="Mizobuchi K."/>
            <person name="Mori H."/>
            <person name="Mori T."/>
            <person name="Motomura K."/>
            <person name="Nakade S."/>
            <person name="Nakamura Y."/>
            <person name="Nashimoto H."/>
            <person name="Nishio Y."/>
            <person name="Oshima T."/>
            <person name="Saito N."/>
            <person name="Sampei G."/>
            <person name="Seki Y."/>
            <person name="Sivasundaram S."/>
            <person name="Tagami H."/>
            <person name="Takeda J."/>
            <person name="Takemoto K."/>
            <person name="Takeuchi Y."/>
            <person name="Wada C."/>
            <person name="Yamamoto Y."/>
            <person name="Horiuchi T."/>
        </authorList>
    </citation>
    <scope>NUCLEOTIDE SEQUENCE [LARGE SCALE GENOMIC DNA]</scope>
    <source>
        <strain>K12 / W3110 / ATCC 27325 / DSM 5911</strain>
    </source>
</reference>
<reference key="2">
    <citation type="journal article" date="1997" name="Science">
        <title>The complete genome sequence of Escherichia coli K-12.</title>
        <authorList>
            <person name="Blattner F.R."/>
            <person name="Plunkett G. III"/>
            <person name="Bloch C.A."/>
            <person name="Perna N.T."/>
            <person name="Burland V."/>
            <person name="Riley M."/>
            <person name="Collado-Vides J."/>
            <person name="Glasner J.D."/>
            <person name="Rode C.K."/>
            <person name="Mayhew G.F."/>
            <person name="Gregor J."/>
            <person name="Davis N.W."/>
            <person name="Kirkpatrick H.A."/>
            <person name="Goeden M.A."/>
            <person name="Rose D.J."/>
            <person name="Mau B."/>
            <person name="Shao Y."/>
        </authorList>
    </citation>
    <scope>NUCLEOTIDE SEQUENCE [LARGE SCALE GENOMIC DNA]</scope>
    <source>
        <strain>K12 / MG1655 / ATCC 47076</strain>
    </source>
</reference>
<reference key="3">
    <citation type="journal article" date="2006" name="Mol. Syst. Biol.">
        <title>Highly accurate genome sequences of Escherichia coli K-12 strains MG1655 and W3110.</title>
        <authorList>
            <person name="Hayashi K."/>
            <person name="Morooka N."/>
            <person name="Yamamoto Y."/>
            <person name="Fujita K."/>
            <person name="Isono K."/>
            <person name="Choi S."/>
            <person name="Ohtsubo E."/>
            <person name="Baba T."/>
            <person name="Wanner B.L."/>
            <person name="Mori H."/>
            <person name="Horiuchi T."/>
        </authorList>
    </citation>
    <scope>NUCLEOTIDE SEQUENCE [LARGE SCALE GENOMIC DNA]</scope>
    <source>
        <strain>K12 / W3110 / ATCC 27325 / DSM 5911</strain>
    </source>
</reference>
<reference key="4">
    <citation type="journal article" date="2017" name="Appl. Environ. Microbiol.">
        <title>Glucosylglycerate phosphorylase, an enzyme with novel specificity involved in compatible solute metabolism.</title>
        <authorList>
            <person name="Franceus J."/>
            <person name="Pinel D."/>
            <person name="Desmet T."/>
        </authorList>
    </citation>
    <scope>FUNCTION</scope>
    <scope>CATALYTIC ACTIVITY</scope>
    <scope>SUBSTRATE SPECIFICITY</scope>
    <scope>BIOPHYSICOCHEMICAL PROPERTIES</scope>
</reference>
<reference key="5">
    <citation type="journal article" date="2018" name="Biochemistry">
        <title>Discovery of a kojibiose phosphorylase in Escherichia coli K-12.</title>
        <authorList>
            <person name="Mukherjee K."/>
            <person name="Narindoshvili T."/>
            <person name="Raushel F.M."/>
        </authorList>
    </citation>
    <scope>FUNCTION</scope>
    <scope>CATALYTIC ACTIVITY</scope>
    <scope>SUBSTRATE SPECIFICITY</scope>
    <scope>BIOPHYSICOCHEMICAL PROPERTIES</scope>
    <scope>DISRUPTION PHENOTYPE</scope>
    <source>
        <strain>K12 / BW25113</strain>
        <strain>K12 / MG1655 / ATCC 47076</strain>
    </source>
</reference>
<evidence type="ECO:0000250" key="1">
    <source>
        <dbReference type="UniProtKB" id="A0ZZH6"/>
    </source>
</evidence>
<evidence type="ECO:0000269" key="2">
    <source>
    </source>
</evidence>
<evidence type="ECO:0000269" key="3">
    <source>
    </source>
</evidence>
<evidence type="ECO:0000303" key="4">
    <source>
    </source>
</evidence>
<evidence type="ECO:0000305" key="5"/>
<keyword id="KW-0119">Carbohydrate metabolism</keyword>
<keyword id="KW-0328">Glycosyltransferase</keyword>
<keyword id="KW-1185">Reference proteome</keyword>
<keyword id="KW-0808">Transferase</keyword>
<sequence>MKQKITDYLDEIYGGTFTATHLQKLVTRLESAKRLITQRRKKHWDESDVVLITYADQFHSNDLKPLPTFNQFYHQWLQSIFSHVHLLPFYPWSSDDGFSVIDYHQVASEAGEWQDIQQLGECSHLMFDFVCNHMSAKSEWFKNYLQQHPGFEDFFIAVDPQTDLSAVTRPRALPLLTPFQMRDHSTRHLWTTFSDDQIDLNYRSPEVLLAMVDVLLCYLAKGAEYVRLDAVGFMWKEPGTSCIHLEKTHLIIKLLRSIIDNVAPGTVIITETNVPHKDNIAYFGAGDDEAHMVYQFSLPPLVLHAVQKQNVEALCAWAQNLTLPSSNTTWFNFLASHDGIGLNPLRGLLPESEILELVEALQQEGALVNWKNNPDGTRSPYEINVTYMDALSRRESSDEERCARFILAHAILLSFPGVPAIYIQSILGSRNDYAGVEKLGYNRAINRKKYHSKEITRELNDEATLRHAVYHELSRLITLRRSHNEFHPDNNFTIDTINSSVMRIPRSNADGNCLTGLFNVSKNIQHVNITNLHGRDLISEVDILGNEITLRPWQVMWIK</sequence>
<dbReference type="EC" id="2.4.1.352" evidence="2 3"/>
<dbReference type="EMBL" id="U00096">
    <property type="protein sequence ID" value="AAC74391.2"/>
    <property type="molecule type" value="Genomic_DNA"/>
</dbReference>
<dbReference type="EMBL" id="AP009048">
    <property type="protein sequence ID" value="BAA14886.1"/>
    <property type="molecule type" value="Genomic_DNA"/>
</dbReference>
<dbReference type="PIR" id="H64879">
    <property type="entry name" value="H64879"/>
</dbReference>
<dbReference type="RefSeq" id="NP_415825.4">
    <property type="nucleotide sequence ID" value="NC_000913.3"/>
</dbReference>
<dbReference type="RefSeq" id="WP_000810499.1">
    <property type="nucleotide sequence ID" value="NZ_LN832404.1"/>
</dbReference>
<dbReference type="SMR" id="P76041"/>
<dbReference type="BioGRID" id="4263230">
    <property type="interactions" value="13"/>
</dbReference>
<dbReference type="FunCoup" id="P76041">
    <property type="interactions" value="39"/>
</dbReference>
<dbReference type="IntAct" id="P76041">
    <property type="interactions" value="2"/>
</dbReference>
<dbReference type="STRING" id="511145.b1309"/>
<dbReference type="CAZy" id="GH13">
    <property type="family name" value="Glycoside Hydrolase Family 13"/>
</dbReference>
<dbReference type="PaxDb" id="511145-b1309"/>
<dbReference type="EnsemblBacteria" id="AAC74391">
    <property type="protein sequence ID" value="AAC74391"/>
    <property type="gene ID" value="b1309"/>
</dbReference>
<dbReference type="GeneID" id="945659"/>
<dbReference type="KEGG" id="ecj:JW1302"/>
<dbReference type="KEGG" id="eco:b1309"/>
<dbReference type="KEGG" id="ecoc:C3026_07675"/>
<dbReference type="PATRIC" id="fig|1411691.4.peg.970"/>
<dbReference type="EchoBASE" id="EB3669"/>
<dbReference type="eggNOG" id="COG0366">
    <property type="taxonomic scope" value="Bacteria"/>
</dbReference>
<dbReference type="HOGENOM" id="CLU_021358_0_0_6"/>
<dbReference type="InParanoid" id="P76041"/>
<dbReference type="OMA" id="ISWWSAM"/>
<dbReference type="OrthoDB" id="9805159at2"/>
<dbReference type="PhylomeDB" id="P76041"/>
<dbReference type="BioCyc" id="EcoCyc:G6647-MONOMER"/>
<dbReference type="BioCyc" id="MetaCyc:G6647-MONOMER"/>
<dbReference type="BRENDA" id="2.4.1.352">
    <property type="organism ID" value="2026"/>
</dbReference>
<dbReference type="SABIO-RK" id="P76041"/>
<dbReference type="PRO" id="PR:P76041"/>
<dbReference type="Proteomes" id="UP000000625">
    <property type="component" value="Chromosome"/>
</dbReference>
<dbReference type="GO" id="GO:0110068">
    <property type="term" value="F:glucosylglycerate phosphorylase activity"/>
    <property type="evidence" value="ECO:0000314"/>
    <property type="project" value="EcoCyc"/>
</dbReference>
<dbReference type="GO" id="GO:0005975">
    <property type="term" value="P:carbohydrate metabolic process"/>
    <property type="evidence" value="ECO:0007669"/>
    <property type="project" value="InterPro"/>
</dbReference>
<dbReference type="CDD" id="cd11356">
    <property type="entry name" value="AmyAc_Sucrose_phosphorylase-like_1"/>
    <property type="match status" value="1"/>
</dbReference>
<dbReference type="Gene3D" id="3.20.20.80">
    <property type="entry name" value="Glycosidases"/>
    <property type="match status" value="1"/>
</dbReference>
<dbReference type="Gene3D" id="3.90.400.10">
    <property type="entry name" value="Oligo-1,6-glucosidase, Domain 2"/>
    <property type="match status" value="1"/>
</dbReference>
<dbReference type="InterPro" id="IPR033746">
    <property type="entry name" value="GGa_phosphorylase"/>
</dbReference>
<dbReference type="InterPro" id="IPR006047">
    <property type="entry name" value="Glyco_hydro_13_cat_dom"/>
</dbReference>
<dbReference type="InterPro" id="IPR017853">
    <property type="entry name" value="Glycoside_hydrolase_SF"/>
</dbReference>
<dbReference type="InterPro" id="IPR045857">
    <property type="entry name" value="O16G_dom_2"/>
</dbReference>
<dbReference type="InterPro" id="IPR016377">
    <property type="entry name" value="Sucrose_GGa_phosphorylase-rel"/>
</dbReference>
<dbReference type="PANTHER" id="PTHR38784">
    <property type="entry name" value="SUCROSE PHOSPHORYLASE"/>
    <property type="match status" value="1"/>
</dbReference>
<dbReference type="PANTHER" id="PTHR38784:SF1">
    <property type="entry name" value="SUCROSE PHOSPHORYLASE"/>
    <property type="match status" value="1"/>
</dbReference>
<dbReference type="Pfam" id="PF00128">
    <property type="entry name" value="Alpha-amylase"/>
    <property type="match status" value="1"/>
</dbReference>
<dbReference type="PIRSF" id="PIRSF003059">
    <property type="entry name" value="Sucrose_phosphorylase"/>
    <property type="match status" value="1"/>
</dbReference>
<dbReference type="SMART" id="SM00642">
    <property type="entry name" value="Aamy"/>
    <property type="match status" value="1"/>
</dbReference>
<dbReference type="SUPFAM" id="SSF51445">
    <property type="entry name" value="(Trans)glycosidases"/>
    <property type="match status" value="1"/>
</dbReference>
<feature type="chain" id="PRO_0000072299" description="Glucosylglycerate phosphorylase">
    <location>
        <begin position="1"/>
        <end position="559"/>
    </location>
</feature>
<feature type="active site" description="Nucleophile" evidence="1">
    <location>
        <position position="229"/>
    </location>
</feature>